<protein>
    <recommendedName>
        <fullName>Vitri peptide A</fullName>
    </recommendedName>
</protein>
<name>VITA_VIOAR</name>
<accession>P83840</accession>
<reference evidence="4" key="1">
    <citation type="journal article" date="2004" name="J. Nat. Prod.">
        <title>Cytotoxic cyclotides from Viola tricolor.</title>
        <authorList>
            <person name="Svangard E."/>
            <person name="Goransson U."/>
            <person name="Hocaoglu Z."/>
            <person name="Gullbo J."/>
            <person name="Larsson R."/>
            <person name="Claeson P."/>
            <person name="Bohlin L."/>
        </authorList>
    </citation>
    <scope>PROTEIN SEQUENCE</scope>
    <scope>FUNCTION</scope>
    <scope>MASS SPECTROMETRY</scope>
</reference>
<evidence type="ECO:0000250" key="1">
    <source>
        <dbReference type="UniProtKB" id="P56871"/>
    </source>
</evidence>
<evidence type="ECO:0000255" key="2">
    <source>
        <dbReference type="PROSITE-ProRule" id="PRU00395"/>
    </source>
</evidence>
<evidence type="ECO:0000269" key="3">
    <source>
    </source>
</evidence>
<evidence type="ECO:0000305" key="4"/>
<proteinExistence type="evidence at protein level"/>
<keyword id="KW-0903">Direct protein sequencing</keyword>
<keyword id="KW-1015">Disulfide bond</keyword>
<keyword id="KW-0960">Knottin</keyword>
<keyword id="KW-0611">Plant defense</keyword>
<organism>
    <name type="scientific">Viola arvensis</name>
    <name type="common">European field pansy</name>
    <name type="synonym">Field violet</name>
    <dbReference type="NCBI Taxonomy" id="97415"/>
    <lineage>
        <taxon>Eukaryota</taxon>
        <taxon>Viridiplantae</taxon>
        <taxon>Streptophyta</taxon>
        <taxon>Embryophyta</taxon>
        <taxon>Tracheophyta</taxon>
        <taxon>Spermatophyta</taxon>
        <taxon>Magnoliopsida</taxon>
        <taxon>eudicotyledons</taxon>
        <taxon>Gunneridae</taxon>
        <taxon>Pentapetalae</taxon>
        <taxon>rosids</taxon>
        <taxon>fabids</taxon>
        <taxon>Malpighiales</taxon>
        <taxon>Violaceae</taxon>
        <taxon>Viola</taxon>
        <taxon>Viola subgen. Viola</taxon>
        <taxon>Viola sect. Melanium</taxon>
        <taxon>Viola subsect. Bracteolatae</taxon>
    </lineage>
</organism>
<comment type="function">
    <text evidence="2 3 4">Probably participates in a plant defense mechanism. Has strong cytotoxic activity against human lymphoma U-937 GTB and human myeloma RPMI-8226/s cell lines.</text>
</comment>
<comment type="domain">
    <text evidence="1">The presence of a 'disulfide through disulfide knot' structurally defines this protein as a knottin.</text>
</comment>
<comment type="PTM">
    <text evidence="2 3">This is a cyclic peptide.</text>
</comment>
<comment type="mass spectrometry"/>
<comment type="similarity">
    <text evidence="2">Belongs to the cyclotide family. Bracelet subfamily.</text>
</comment>
<comment type="caution">
    <text evidence="4">This peptide is cyclic. The start position was chosen by similarity to OAK1 (kalata-B1) for which the DNA sequence is known.</text>
</comment>
<feature type="peptide" id="PRO_0000043633" description="Vitri peptide A" evidence="2 3">
    <location>
        <begin position="1"/>
        <end position="30"/>
    </location>
</feature>
<feature type="disulfide bond" evidence="1 2">
    <location>
        <begin position="4"/>
        <end position="20"/>
    </location>
</feature>
<feature type="disulfide bond" evidence="1 2">
    <location>
        <begin position="8"/>
        <end position="22"/>
    </location>
</feature>
<feature type="disulfide bond" evidence="1 2">
    <location>
        <begin position="13"/>
        <end position="27"/>
    </location>
</feature>
<feature type="cross-link" description="Cyclopeptide (Gly-Asn)" evidence="3">
    <location>
        <begin position="1"/>
        <end position="30"/>
    </location>
</feature>
<sequence>GIPCGESCVWIPCITSAIGCSCKSKVCYRN</sequence>
<dbReference type="SMR" id="P83840"/>
<dbReference type="GO" id="GO:0006952">
    <property type="term" value="P:defense response"/>
    <property type="evidence" value="ECO:0000314"/>
    <property type="project" value="UniProtKB"/>
</dbReference>
<dbReference type="InterPro" id="IPR005535">
    <property type="entry name" value="Cyclotide"/>
</dbReference>
<dbReference type="InterPro" id="IPR012323">
    <property type="entry name" value="Cyclotide_bracelet_CS"/>
</dbReference>
<dbReference type="InterPro" id="IPR036146">
    <property type="entry name" value="Cyclotide_sf"/>
</dbReference>
<dbReference type="Pfam" id="PF03784">
    <property type="entry name" value="Cyclotide"/>
    <property type="match status" value="1"/>
</dbReference>
<dbReference type="PIRSF" id="PIRSF037891">
    <property type="entry name" value="Cycloviolacin"/>
    <property type="match status" value="1"/>
</dbReference>
<dbReference type="SUPFAM" id="SSF57038">
    <property type="entry name" value="Cyclotides"/>
    <property type="match status" value="1"/>
</dbReference>
<dbReference type="PROSITE" id="PS51052">
    <property type="entry name" value="CYCLOTIDE"/>
    <property type="match status" value="1"/>
</dbReference>
<dbReference type="PROSITE" id="PS60008">
    <property type="entry name" value="CYCLOTIDE_BRACELET"/>
    <property type="match status" value="1"/>
</dbReference>